<feature type="chain" id="PRO_0000456588" description="Cytochrome P450 monooxygenase MO6277">
    <location>
        <begin position="1"/>
        <end position="514"/>
    </location>
</feature>
<feature type="transmembrane region" description="Helical" evidence="2">
    <location>
        <begin position="6"/>
        <end position="26"/>
    </location>
</feature>
<feature type="binding site" description="axial binding residue" evidence="1">
    <location>
        <position position="457"/>
    </location>
    <ligand>
        <name>heme</name>
        <dbReference type="ChEBI" id="CHEBI:30413"/>
    </ligand>
    <ligandPart>
        <name>Fe</name>
        <dbReference type="ChEBI" id="CHEBI:18248"/>
    </ligandPart>
</feature>
<proteinExistence type="evidence at protein level"/>
<dbReference type="EC" id="1.14.14.-" evidence="3"/>
<dbReference type="EMBL" id="KB205944">
    <property type="status" value="NOT_ANNOTATED_CDS"/>
    <property type="molecule type" value="Genomic_DNA"/>
</dbReference>
<dbReference type="SMR" id="P9WES3"/>
<dbReference type="GO" id="GO:0016020">
    <property type="term" value="C:membrane"/>
    <property type="evidence" value="ECO:0007669"/>
    <property type="project" value="UniProtKB-SubCell"/>
</dbReference>
<dbReference type="GO" id="GO:0020037">
    <property type="term" value="F:heme binding"/>
    <property type="evidence" value="ECO:0007669"/>
    <property type="project" value="InterPro"/>
</dbReference>
<dbReference type="GO" id="GO:0005506">
    <property type="term" value="F:iron ion binding"/>
    <property type="evidence" value="ECO:0007669"/>
    <property type="project" value="InterPro"/>
</dbReference>
<dbReference type="GO" id="GO:0004497">
    <property type="term" value="F:monooxygenase activity"/>
    <property type="evidence" value="ECO:0007669"/>
    <property type="project" value="UniProtKB-KW"/>
</dbReference>
<dbReference type="GO" id="GO:0016705">
    <property type="term" value="F:oxidoreductase activity, acting on paired donors, with incorporation or reduction of molecular oxygen"/>
    <property type="evidence" value="ECO:0007669"/>
    <property type="project" value="InterPro"/>
</dbReference>
<dbReference type="CDD" id="cd11062">
    <property type="entry name" value="CYP58-like"/>
    <property type="match status" value="1"/>
</dbReference>
<dbReference type="FunFam" id="1.10.630.10:FF:000069">
    <property type="entry name" value="Cytochrome P450, putative (Eurofung)"/>
    <property type="match status" value="1"/>
</dbReference>
<dbReference type="Gene3D" id="1.10.630.10">
    <property type="entry name" value="Cytochrome P450"/>
    <property type="match status" value="1"/>
</dbReference>
<dbReference type="InterPro" id="IPR001128">
    <property type="entry name" value="Cyt_P450"/>
</dbReference>
<dbReference type="InterPro" id="IPR017972">
    <property type="entry name" value="Cyt_P450_CS"/>
</dbReference>
<dbReference type="InterPro" id="IPR002401">
    <property type="entry name" value="Cyt_P450_E_grp-I"/>
</dbReference>
<dbReference type="InterPro" id="IPR036396">
    <property type="entry name" value="Cyt_P450_sf"/>
</dbReference>
<dbReference type="InterPro" id="IPR050121">
    <property type="entry name" value="Cytochrome_P450_monoxygenase"/>
</dbReference>
<dbReference type="PANTHER" id="PTHR24305">
    <property type="entry name" value="CYTOCHROME P450"/>
    <property type="match status" value="1"/>
</dbReference>
<dbReference type="PANTHER" id="PTHR24305:SF157">
    <property type="entry name" value="N-ACETYLTRYPTOPHAN 6-HYDROXYLASE IVOC-RELATED"/>
    <property type="match status" value="1"/>
</dbReference>
<dbReference type="Pfam" id="PF00067">
    <property type="entry name" value="p450"/>
    <property type="match status" value="1"/>
</dbReference>
<dbReference type="PRINTS" id="PR00463">
    <property type="entry name" value="EP450I"/>
</dbReference>
<dbReference type="PRINTS" id="PR00385">
    <property type="entry name" value="P450"/>
</dbReference>
<dbReference type="SUPFAM" id="SSF48264">
    <property type="entry name" value="Cytochrome P450"/>
    <property type="match status" value="1"/>
</dbReference>
<dbReference type="PROSITE" id="PS00086">
    <property type="entry name" value="CYTOCHROME_P450"/>
    <property type="match status" value="1"/>
</dbReference>
<keyword id="KW-0349">Heme</keyword>
<keyword id="KW-0408">Iron</keyword>
<keyword id="KW-0472">Membrane</keyword>
<keyword id="KW-0479">Metal-binding</keyword>
<keyword id="KW-0503">Monooxygenase</keyword>
<keyword id="KW-0560">Oxidoreductase</keyword>
<keyword id="KW-0812">Transmembrane</keyword>
<keyword id="KW-1133">Transmembrane helix</keyword>
<evidence type="ECO:0000250" key="1">
    <source>
        <dbReference type="UniProtKB" id="P04798"/>
    </source>
</evidence>
<evidence type="ECO:0000255" key="2"/>
<evidence type="ECO:0000269" key="3">
    <source>
    </source>
</evidence>
<evidence type="ECO:0000303" key="4">
    <source>
    </source>
</evidence>
<evidence type="ECO:0000305" key="5"/>
<evidence type="ECO:0000305" key="6">
    <source>
    </source>
</evidence>
<comment type="function">
    <text evidence="3 6">Cytochrome P450 monooxygenase that hydroxylates polyporic acid produced by the nonribosomal peptide synthetase acyN to produce the less toxic metabolite ascocorynin (PubMed:35477441). The hydrophobic substrate polyporic acid might approach the active site from the membrane and, after hydroxylation into ascocorynin, leaves into the cytoplasm (Probable). MO6277 appears vital to avoid high-level accumulation of polyporic acid in the fungal membrane (PubMed:35477441).</text>
</comment>
<comment type="catalytic activity">
    <reaction evidence="3">
        <text>polyporic acid + reduced [NADPH--hemoprotein reductase] + O2 = ascocorynin + oxidized [NADPH--hemoprotein reductase] + H2O + H(+)</text>
        <dbReference type="Rhea" id="RHEA:72887"/>
        <dbReference type="Rhea" id="RHEA-COMP:11964"/>
        <dbReference type="Rhea" id="RHEA-COMP:11965"/>
        <dbReference type="ChEBI" id="CHEBI:15377"/>
        <dbReference type="ChEBI" id="CHEBI:15378"/>
        <dbReference type="ChEBI" id="CHEBI:15379"/>
        <dbReference type="ChEBI" id="CHEBI:57618"/>
        <dbReference type="ChEBI" id="CHEBI:58210"/>
        <dbReference type="ChEBI" id="CHEBI:192516"/>
        <dbReference type="ChEBI" id="CHEBI:192517"/>
    </reaction>
    <physiologicalReaction direction="left-to-right" evidence="3">
        <dbReference type="Rhea" id="RHEA:72888"/>
    </physiologicalReaction>
</comment>
<comment type="cofactor">
    <cofactor evidence="1">
        <name>heme</name>
        <dbReference type="ChEBI" id="CHEBI:30413"/>
    </cofactor>
</comment>
<comment type="pathway">
    <text evidence="3">Secondary metabolite biosynthesis.</text>
</comment>
<comment type="subcellular location">
    <subcellularLocation>
        <location evidence="2">Membrane</location>
        <topology evidence="2">Single-pass membrane protein</topology>
    </subcellularLocation>
</comment>
<comment type="similarity">
    <text evidence="5">Belongs to the cytochrome P450 family.</text>
</comment>
<reference key="1">
    <citation type="journal article" date="2012" name="PLoS Genet.">
        <title>Genomic analysis of the hydrocarbon-producing, cellulolytic, endophytic fungus Ascocoryne sarcoides.</title>
        <authorList>
            <person name="Gianoulis T.A."/>
            <person name="Griffin M.A."/>
            <person name="Spakowicz D.J."/>
            <person name="Dunican B.F."/>
            <person name="Alpha C.J."/>
            <person name="Sboner A."/>
            <person name="Sismour A.M."/>
            <person name="Kodira C."/>
            <person name="Egholm M."/>
            <person name="Church G.M."/>
            <person name="Gerstein M.B."/>
            <person name="Strobel S.A."/>
        </authorList>
    </citation>
    <scope>NUCLEOTIDE SEQUENCE [LARGE SCALE GENOMIC DNA]</scope>
    <source>
        <strain>NRRL 50072</strain>
    </source>
</reference>
<reference key="2">
    <citation type="journal article" date="2022" name="Fungal Biol. Biotechnol.">
        <title>Characterisation of ascocorynin biosynthesis in the purple jellydisc fungus Ascocoryne sarcoides.</title>
        <authorList>
            <person name="Wieder C."/>
            <person name="Peres da Silva R."/>
            <person name="Witts J."/>
            <person name="Jaeger C.M."/>
            <person name="Geib E."/>
            <person name="Brock M."/>
        </authorList>
    </citation>
    <scope>FUNCTION</scope>
    <scope>CATALYTIC ACTIVITY</scope>
    <scope>PATHWAY</scope>
</reference>
<sequence>MHYSPLTVLALLGGTLLLYCSGLVIYRLVFDPLSKFPGPKLSAATFWYEFYYDVIKKGQFTFKIGEWHKQYGPIIRINPYEIHIDDPEGDFYHTVFSGTGVRDKHFWYASQFGTPESGLGTINHHLHRHRRRALNPSFSKASIVRLTPVIWSKIEKLCSRFDELRGTDQPVNVRLAYTCLTTDVITSYAFNRCWNHLDKPDFSPVWCKTLVNGSKMTRWTKQFPWMLETMKKMPQALVGFFDPGMLLVFDVMNKIHHQILDILNGKQEVEDSATDGLSKSPIPNRTIFHELLKSDLPDYDKTIHHLGQEGQNIIGAGADTTSNALTVITYHLLSNPRVLGKLKEELERAMPDRYGAWDLKVAEGLPYLGGVIQEGLRLAYGASSRLTRVAPEEDLNFDGWFIQKGTPISMTALYMHHNEKIFPNSHTFLPERWTDAPDGGRSLDRYLVSFSKGSRQCIGINLAKVELFLTLATVFRRFEMDLHDTVFERDVQLKHDFFLPQPSMQSNGVRVIFK</sequence>
<protein>
    <recommendedName>
        <fullName evidence="4">Cytochrome P450 monooxygenase MO6277</fullName>
        <ecNumber evidence="3">1.14.14.-</ecNumber>
    </recommendedName>
    <alternativeName>
        <fullName evidence="4">Ascocorynin biosynthesis protein MO6277</fullName>
    </alternativeName>
</protein>
<organism>
    <name type="scientific">Ascocoryne sarcoides</name>
    <name type="common">Purple jellydisc fungus</name>
    <name type="synonym">Bulgaria sarcoides</name>
    <dbReference type="NCBI Taxonomy" id="139061"/>
    <lineage>
        <taxon>Eukaryota</taxon>
        <taxon>Fungi</taxon>
        <taxon>Dikarya</taxon>
        <taxon>Ascomycota</taxon>
        <taxon>Pezizomycotina</taxon>
        <taxon>Leotiomycetes</taxon>
        <taxon>Helotiales</taxon>
        <taxon>Gelatinodiscaceae</taxon>
        <taxon>Ascocoryne</taxon>
    </lineage>
</organism>
<name>M6277_ASCSA</name>
<accession>P9WES3</accession>